<protein>
    <recommendedName>
        <fullName>Probable glucan 1,3-beta-glucosidase A</fullName>
        <ecNumber>3.2.1.58</ecNumber>
    </recommendedName>
    <alternativeName>
        <fullName>Exo-1,3-beta-glucanase 1</fullName>
    </alternativeName>
    <alternativeName>
        <fullName>Exo-1,3-beta-glucanase A</fullName>
    </alternativeName>
</protein>
<keyword id="KW-0119">Carbohydrate metabolism</keyword>
<keyword id="KW-0961">Cell wall biogenesis/degradation</keyword>
<keyword id="KW-1015">Disulfide bond</keyword>
<keyword id="KW-0326">Glycosidase</keyword>
<keyword id="KW-0378">Hydrolase</keyword>
<keyword id="KW-0464">Manganese</keyword>
<keyword id="KW-0479">Metal-binding</keyword>
<keyword id="KW-0624">Polysaccharide degradation</keyword>
<keyword id="KW-1185">Reference proteome</keyword>
<keyword id="KW-0964">Secreted</keyword>
<keyword id="KW-0732">Signal</keyword>
<feature type="signal peptide" evidence="2">
    <location>
        <begin position="1"/>
        <end position="21"/>
    </location>
</feature>
<feature type="chain" id="PRO_0000393531" description="Probable glucan 1,3-beta-glucosidase A">
    <location>
        <begin position="22"/>
        <end position="416"/>
    </location>
</feature>
<feature type="active site" description="Proton donor" evidence="1">
    <location>
        <position position="209"/>
    </location>
</feature>
<feature type="active site" description="Nucleophile" evidence="1">
    <location>
        <position position="308"/>
    </location>
</feature>
<feature type="disulfide bond" evidence="1">
    <location>
        <begin position="290"/>
        <end position="415"/>
    </location>
</feature>
<feature type="disulfide bond" evidence="1">
    <location>
        <begin position="316"/>
        <end position="341"/>
    </location>
</feature>
<comment type="function">
    <text evidence="1">Beta-glucanases participate in the metabolism of beta-glucan, the main structural component of the cell wall. It could also function biosynthetically as a transglycosylase (By similarity).</text>
</comment>
<comment type="catalytic activity">
    <reaction>
        <text>Successive hydrolysis of beta-D-glucose units from the non-reducing ends of (1-&gt;3)-beta-D-glucans, releasing alpha-glucose.</text>
        <dbReference type="EC" id="3.2.1.58"/>
    </reaction>
</comment>
<comment type="cofactor">
    <cofactor evidence="1">
        <name>Mn(2+)</name>
        <dbReference type="ChEBI" id="CHEBI:29035"/>
    </cofactor>
</comment>
<comment type="subunit">
    <text evidence="1">Monomer.</text>
</comment>
<comment type="subcellular location">
    <subcellularLocation>
        <location evidence="1">Secreted</location>
    </subcellularLocation>
</comment>
<comment type="similarity">
    <text evidence="3">Belongs to the glycosyl hydrolase 5 (cellulase A) family.</text>
</comment>
<proteinExistence type="inferred from homology"/>
<sequence>MLYNLSKAVLALSVLAASADAAGIRLEKRASTFDYETEMVRGVCLGGWLVLEPWLSPGLFDAAPDGAVDEWTYTEILGQDEAKARLIGHWDTFITEQDFFDIAAAGMNHVRIPIGYWAVEALPGDPYVDGQLEYLDRAIEWAGAAGLKVIVDLHGAPGSQNGFDNSGRKGAIQWGQGDTLGQTVNAFRKLAERYVPSSDVVTAIEAVNEPFIPGGVNEDQLKEYYQQAYDIVTQMSPDVDLVFSDGFINPTPWNGFISDSGNIVMDNHHYEVFDINLLRMSVDDHVRSVCDFGRTQLAPATKPVVVGEWTGAMTDCARYLNGRGVGARYDGAMGGESVGDCGPFIQGSVSDLSPDDQKNMRRFIEAQLDAWEMKSGWLFWNWKTEQGAPGWDMKDLLDNGVFPFPLESRKYPGQCG</sequence>
<name>EXGA_ASPTN</name>
<evidence type="ECO:0000250" key="1"/>
<evidence type="ECO:0000255" key="2"/>
<evidence type="ECO:0000305" key="3"/>
<accession>Q0CR35</accession>
<gene>
    <name type="primary">exgA</name>
    <name type="synonym">exg1</name>
    <name type="ORF">ATEG_03849</name>
</gene>
<dbReference type="EC" id="3.2.1.58"/>
<dbReference type="EMBL" id="CH476598">
    <property type="protein sequence ID" value="EAU35651.1"/>
    <property type="molecule type" value="Genomic_DNA"/>
</dbReference>
<dbReference type="RefSeq" id="XP_001213027.1">
    <property type="nucleotide sequence ID" value="XM_001213027.1"/>
</dbReference>
<dbReference type="SMR" id="Q0CR35"/>
<dbReference type="STRING" id="341663.Q0CR35"/>
<dbReference type="EnsemblFungi" id="EAU35651">
    <property type="protein sequence ID" value="EAU35651"/>
    <property type="gene ID" value="ATEG_03849"/>
</dbReference>
<dbReference type="GeneID" id="4318487"/>
<dbReference type="VEuPathDB" id="FungiDB:ATEG_03849"/>
<dbReference type="eggNOG" id="ENOG502QPYU">
    <property type="taxonomic scope" value="Eukaryota"/>
</dbReference>
<dbReference type="HOGENOM" id="CLU_004624_0_1_1"/>
<dbReference type="OMA" id="GWDMQDL"/>
<dbReference type="OrthoDB" id="62120at2759"/>
<dbReference type="Proteomes" id="UP000007963">
    <property type="component" value="Unassembled WGS sequence"/>
</dbReference>
<dbReference type="GO" id="GO:0009986">
    <property type="term" value="C:cell surface"/>
    <property type="evidence" value="ECO:0007669"/>
    <property type="project" value="TreeGrafter"/>
</dbReference>
<dbReference type="GO" id="GO:0005576">
    <property type="term" value="C:extracellular region"/>
    <property type="evidence" value="ECO:0007669"/>
    <property type="project" value="UniProtKB-SubCell"/>
</dbReference>
<dbReference type="GO" id="GO:0004338">
    <property type="term" value="F:glucan exo-1,3-beta-glucosidase activity"/>
    <property type="evidence" value="ECO:0007669"/>
    <property type="project" value="UniProtKB-EC"/>
</dbReference>
<dbReference type="GO" id="GO:0046872">
    <property type="term" value="F:metal ion binding"/>
    <property type="evidence" value="ECO:0007669"/>
    <property type="project" value="UniProtKB-KW"/>
</dbReference>
<dbReference type="GO" id="GO:0071555">
    <property type="term" value="P:cell wall organization"/>
    <property type="evidence" value="ECO:0007669"/>
    <property type="project" value="UniProtKB-KW"/>
</dbReference>
<dbReference type="GO" id="GO:0009251">
    <property type="term" value="P:glucan catabolic process"/>
    <property type="evidence" value="ECO:0007669"/>
    <property type="project" value="TreeGrafter"/>
</dbReference>
<dbReference type="FunFam" id="3.20.20.80:FF:000033">
    <property type="entry name" value="Glucan 1,3-beta-glucosidase A"/>
    <property type="match status" value="1"/>
</dbReference>
<dbReference type="Gene3D" id="3.20.20.80">
    <property type="entry name" value="Glycosidases"/>
    <property type="match status" value="1"/>
</dbReference>
<dbReference type="InterPro" id="IPR001547">
    <property type="entry name" value="Glyco_hydro_5"/>
</dbReference>
<dbReference type="InterPro" id="IPR017853">
    <property type="entry name" value="Glycoside_hydrolase_SF"/>
</dbReference>
<dbReference type="InterPro" id="IPR050386">
    <property type="entry name" value="Glycosyl_hydrolase_5"/>
</dbReference>
<dbReference type="PANTHER" id="PTHR31297:SF1">
    <property type="entry name" value="GLUCAN 1,3-BETA-GLUCOSIDASE I_II-RELATED"/>
    <property type="match status" value="1"/>
</dbReference>
<dbReference type="PANTHER" id="PTHR31297">
    <property type="entry name" value="GLUCAN ENDO-1,6-BETA-GLUCOSIDASE B"/>
    <property type="match status" value="1"/>
</dbReference>
<dbReference type="Pfam" id="PF00150">
    <property type="entry name" value="Cellulase"/>
    <property type="match status" value="1"/>
</dbReference>
<dbReference type="SUPFAM" id="SSF51445">
    <property type="entry name" value="(Trans)glycosidases"/>
    <property type="match status" value="1"/>
</dbReference>
<organism>
    <name type="scientific">Aspergillus terreus (strain NIH 2624 / FGSC A1156)</name>
    <dbReference type="NCBI Taxonomy" id="341663"/>
    <lineage>
        <taxon>Eukaryota</taxon>
        <taxon>Fungi</taxon>
        <taxon>Dikarya</taxon>
        <taxon>Ascomycota</taxon>
        <taxon>Pezizomycotina</taxon>
        <taxon>Eurotiomycetes</taxon>
        <taxon>Eurotiomycetidae</taxon>
        <taxon>Eurotiales</taxon>
        <taxon>Aspergillaceae</taxon>
        <taxon>Aspergillus</taxon>
        <taxon>Aspergillus subgen. Circumdati</taxon>
    </lineage>
</organism>
<reference key="1">
    <citation type="submission" date="2005-09" db="EMBL/GenBank/DDBJ databases">
        <title>Annotation of the Aspergillus terreus NIH2624 genome.</title>
        <authorList>
            <person name="Birren B.W."/>
            <person name="Lander E.S."/>
            <person name="Galagan J.E."/>
            <person name="Nusbaum C."/>
            <person name="Devon K."/>
            <person name="Henn M."/>
            <person name="Ma L.-J."/>
            <person name="Jaffe D.B."/>
            <person name="Butler J."/>
            <person name="Alvarez P."/>
            <person name="Gnerre S."/>
            <person name="Grabherr M."/>
            <person name="Kleber M."/>
            <person name="Mauceli E.W."/>
            <person name="Brockman W."/>
            <person name="Rounsley S."/>
            <person name="Young S.K."/>
            <person name="LaButti K."/>
            <person name="Pushparaj V."/>
            <person name="DeCaprio D."/>
            <person name="Crawford M."/>
            <person name="Koehrsen M."/>
            <person name="Engels R."/>
            <person name="Montgomery P."/>
            <person name="Pearson M."/>
            <person name="Howarth C."/>
            <person name="Larson L."/>
            <person name="Luoma S."/>
            <person name="White J."/>
            <person name="Alvarado L."/>
            <person name="Kodira C.D."/>
            <person name="Zeng Q."/>
            <person name="Oleary S."/>
            <person name="Yandava C."/>
            <person name="Denning D.W."/>
            <person name="Nierman W.C."/>
            <person name="Milne T."/>
            <person name="Madden K."/>
        </authorList>
    </citation>
    <scope>NUCLEOTIDE SEQUENCE [LARGE SCALE GENOMIC DNA]</scope>
    <source>
        <strain>NIH 2624 / FGSC A1156</strain>
    </source>
</reference>